<sequence>MDKVLNREESMELMDLLGLERAAWGNLPLMRKAYLKKCKEFHPDKGGDEDKMKRMNTLYKKMEQDVKVAHQPDFGTWNSSEVCADFPLCPDTLYCKEWPICSKKPSVHCPCMLCQLRLRHLNRKFLRKEPLVWIDCYCIDCFTQWFGLDLTEETLQWWVQIIGETPFRDLKL</sequence>
<dbReference type="EMBL" id="M23122">
    <property type="protein sequence ID" value="AAA46883.1"/>
    <property type="molecule type" value="Genomic_DNA"/>
</dbReference>
<dbReference type="PIR" id="B33278">
    <property type="entry name" value="TVVPSS"/>
</dbReference>
<dbReference type="SMR" id="P15000"/>
<dbReference type="Proteomes" id="UP000008166">
    <property type="component" value="Genome"/>
</dbReference>
<dbReference type="GO" id="GO:0030430">
    <property type="term" value="C:host cell cytoplasm"/>
    <property type="evidence" value="ECO:0007669"/>
    <property type="project" value="UniProtKB-SubCell"/>
</dbReference>
<dbReference type="GO" id="GO:0042025">
    <property type="term" value="C:host cell nucleus"/>
    <property type="evidence" value="ECO:0007669"/>
    <property type="project" value="UniProtKB-SubCell"/>
</dbReference>
<dbReference type="GO" id="GO:0008270">
    <property type="term" value="F:zinc ion binding"/>
    <property type="evidence" value="ECO:0007669"/>
    <property type="project" value="UniProtKB-KW"/>
</dbReference>
<dbReference type="CDD" id="cd06257">
    <property type="entry name" value="DnaJ"/>
    <property type="match status" value="1"/>
</dbReference>
<dbReference type="FunFam" id="1.10.287.110:FF:000161">
    <property type="entry name" value="Small t antigen"/>
    <property type="match status" value="1"/>
</dbReference>
<dbReference type="Gene3D" id="1.10.287.110">
    <property type="entry name" value="DnaJ domain"/>
    <property type="match status" value="1"/>
</dbReference>
<dbReference type="Gene3D" id="1.20.120.1860">
    <property type="entry name" value="Small t-antigen, unique domain"/>
    <property type="match status" value="1"/>
</dbReference>
<dbReference type="InterPro" id="IPR001623">
    <property type="entry name" value="DnaJ_domain"/>
</dbReference>
<dbReference type="InterPro" id="IPR036869">
    <property type="entry name" value="J_dom_sf"/>
</dbReference>
<dbReference type="InterPro" id="IPR003354">
    <property type="entry name" value="Papo_T_antigen"/>
</dbReference>
<dbReference type="InterPro" id="IPR036092">
    <property type="entry name" value="Papo_T_antigensf"/>
</dbReference>
<dbReference type="Pfam" id="PF02380">
    <property type="entry name" value="Papo_T_antigen"/>
    <property type="match status" value="1"/>
</dbReference>
<dbReference type="SMART" id="SM00271">
    <property type="entry name" value="DnaJ"/>
    <property type="match status" value="1"/>
</dbReference>
<dbReference type="SUPFAM" id="SSF46565">
    <property type="entry name" value="Chaperone J-domain"/>
    <property type="match status" value="1"/>
</dbReference>
<dbReference type="SUPFAM" id="SSF161240">
    <property type="entry name" value="T-antigen specific domain-like"/>
    <property type="match status" value="1"/>
</dbReference>
<dbReference type="PROSITE" id="PS50076">
    <property type="entry name" value="DNAJ_2"/>
    <property type="match status" value="1"/>
</dbReference>
<feature type="chain" id="PRO_0000115052" description="Small t antigen">
    <location>
        <begin position="1"/>
        <end position="172"/>
    </location>
</feature>
<feature type="domain" description="J" evidence="2">
    <location>
        <begin position="12"/>
        <end position="75"/>
    </location>
</feature>
<feature type="zinc finger region" description="C4-type; atypical">
    <location>
        <begin position="101"/>
        <end position="114"/>
    </location>
</feature>
<feature type="zinc finger region" description="H1C3-type; atypical">
    <location>
        <begin position="120"/>
        <end position="141"/>
    </location>
</feature>
<feature type="modified residue" description="N-acetylmethionine; by host" evidence="1">
    <location>
        <position position="1"/>
    </location>
</feature>
<protein>
    <recommendedName>
        <fullName>Small t antigen</fullName>
        <shortName>ST</shortName>
        <shortName>ST-AG</shortName>
    </recommendedName>
</protein>
<evidence type="ECO:0000250" key="1">
    <source>
        <dbReference type="UniProtKB" id="P03081"/>
    </source>
</evidence>
<evidence type="ECO:0000255" key="2">
    <source>
        <dbReference type="PROSITE-ProRule" id="PRU00286"/>
    </source>
</evidence>
<proteinExistence type="inferred from homology"/>
<keyword id="KW-0007">Acetylation</keyword>
<keyword id="KW-0010">Activator</keyword>
<keyword id="KW-0025">Alternative splicing</keyword>
<keyword id="KW-0244">Early protein</keyword>
<keyword id="KW-1035">Host cytoplasm</keyword>
<keyword id="KW-1048">Host nucleus</keyword>
<keyword id="KW-0945">Host-virus interaction</keyword>
<keyword id="KW-0479">Metal-binding</keyword>
<keyword id="KW-0553">Oncogene</keyword>
<keyword id="KW-0597">Phosphoprotein</keyword>
<keyword id="KW-0804">Transcription</keyword>
<keyword id="KW-0805">Transcription regulation</keyword>
<keyword id="KW-0862">Zinc</keyword>
<keyword id="KW-0863">Zinc-finger</keyword>
<comment type="function">
    <text evidence="1">Promotes efficient viral genome replication by accelerating both G1 and S phase progression of the cell cycle. Inhibits host PP2A by binding to the A subunit, thereby displacing lower affinity regulatory B subunit. Inactivation of PP2A in turn results in the transactivation of cyclin A and cyclin D1 promoters. Late during the infection cycle, ST may induce dephosphorylation of host MTOR, leading to the inhibition of cap-dependent translation. May establish and maintain high levels of viral genomes during persistent infection in cell culture.</text>
</comment>
<comment type="subunit">
    <text evidence="1">Interacts with host PPP2R1A; the interaction inhibits PP2A activity.</text>
</comment>
<comment type="subcellular location">
    <subcellularLocation>
        <location>Host cytoplasm</location>
    </subcellularLocation>
    <subcellularLocation>
        <location evidence="1">Host nucleus</location>
    </subcellularLocation>
</comment>
<comment type="alternative products">
    <event type="alternative splicing"/>
    <isoform>
        <id>P15000-1</id>
        <name>Small t antigen</name>
        <sequence type="displayed"/>
    </isoform>
    <isoform>
        <id>P14999-1</id>
        <name>Large T antigen</name>
        <sequence type="external"/>
    </isoform>
</comment>
<comment type="domain">
    <text evidence="1">The common region of ST and LT proteins comprises the J domain. This domain is essential for multiple viral activities, including virion assembly, viral DNA replication, transformation and transcriptional activation. This domain is also required for cyclin A-transactivating activity of ST.</text>
</comment>
<organism>
    <name type="scientific">BK polyomavirus (strain AS)</name>
    <name type="common">BKPyV</name>
    <dbReference type="NCBI Taxonomy" id="10631"/>
    <lineage>
        <taxon>Viruses</taxon>
        <taxon>Monodnaviria</taxon>
        <taxon>Shotokuvirae</taxon>
        <taxon>Cossaviricota</taxon>
        <taxon>Papovaviricetes</taxon>
        <taxon>Sepolyvirales</taxon>
        <taxon>Polyomaviridae</taxon>
        <taxon>Betapolyomavirus</taxon>
        <taxon>BK polyomavirus</taxon>
    </lineage>
</organism>
<organismHost>
    <name type="scientific">Homo sapiens</name>
    <name type="common">Human</name>
    <dbReference type="NCBI Taxonomy" id="9606"/>
</organismHost>
<name>ST_POVBA</name>
<accession>P15000</accession>
<reference key="1">
    <citation type="journal article" date="1989" name="J. Virol.">
        <title>Nucleotide sequence of the human polyomavirus AS virus, an antigenic variant of BK virus.</title>
        <authorList>
            <person name="Tavis J.E."/>
            <person name="Walker D.L."/>
            <person name="Gardner S.D."/>
            <person name="Frisque R.J."/>
        </authorList>
    </citation>
    <scope>NUCLEOTIDE SEQUENCE [GENOMIC DNA]</scope>
</reference>